<organism>
    <name type="scientific">Phaeodactylum tricornutum (strain CCAP 1055/1)</name>
    <dbReference type="NCBI Taxonomy" id="556484"/>
    <lineage>
        <taxon>Eukaryota</taxon>
        <taxon>Sar</taxon>
        <taxon>Stramenopiles</taxon>
        <taxon>Ochrophyta</taxon>
        <taxon>Bacillariophyta</taxon>
        <taxon>Bacillariophyceae</taxon>
        <taxon>Bacillariophycidae</taxon>
        <taxon>Naviculales</taxon>
        <taxon>Phaeodactylaceae</taxon>
        <taxon>Phaeodactylum</taxon>
    </lineage>
</organism>
<proteinExistence type="inferred from homology"/>
<evidence type="ECO:0000250" key="1"/>
<evidence type="ECO:0000305" key="2"/>
<comment type="function">
    <text evidence="1">Binds 23S rRNA.</text>
</comment>
<comment type="subunit">
    <text evidence="1">Part of the 50S ribosomal subunit.</text>
</comment>
<comment type="subcellular location">
    <subcellularLocation>
        <location>Plastid</location>
        <location>Chloroplast</location>
    </subcellularLocation>
</comment>
<comment type="similarity">
    <text evidence="2">Belongs to the universal ribosomal protein uL6 family.</text>
</comment>
<protein>
    <recommendedName>
        <fullName evidence="2">Large ribosomal subunit protein uL6c</fullName>
    </recommendedName>
    <alternativeName>
        <fullName>50S ribosomal protein L6, chloroplastic</fullName>
    </alternativeName>
</protein>
<keyword id="KW-0150">Chloroplast</keyword>
<keyword id="KW-0934">Plastid</keyword>
<keyword id="KW-1185">Reference proteome</keyword>
<keyword id="KW-0687">Ribonucleoprotein</keyword>
<keyword id="KW-0689">Ribosomal protein</keyword>
<keyword id="KW-0694">RNA-binding</keyword>
<keyword id="KW-0699">rRNA-binding</keyword>
<geneLocation type="chloroplast"/>
<dbReference type="EMBL" id="EF067920">
    <property type="protein sequence ID" value="ABK20691.1"/>
    <property type="molecule type" value="Genomic_DNA"/>
</dbReference>
<dbReference type="RefSeq" id="YP_874468.1">
    <property type="nucleotide sequence ID" value="NC_008588.1"/>
</dbReference>
<dbReference type="SMR" id="A0T0J3"/>
<dbReference type="STRING" id="556484.A0T0J3"/>
<dbReference type="GeneID" id="4524643"/>
<dbReference type="InParanoid" id="A0T0J3"/>
<dbReference type="Proteomes" id="UP000000759">
    <property type="component" value="Chloroplast"/>
</dbReference>
<dbReference type="GO" id="GO:0009507">
    <property type="term" value="C:chloroplast"/>
    <property type="evidence" value="ECO:0007669"/>
    <property type="project" value="UniProtKB-SubCell"/>
</dbReference>
<dbReference type="GO" id="GO:1990904">
    <property type="term" value="C:ribonucleoprotein complex"/>
    <property type="evidence" value="ECO:0007669"/>
    <property type="project" value="UniProtKB-KW"/>
</dbReference>
<dbReference type="GO" id="GO:0005840">
    <property type="term" value="C:ribosome"/>
    <property type="evidence" value="ECO:0007669"/>
    <property type="project" value="UniProtKB-KW"/>
</dbReference>
<dbReference type="GO" id="GO:0019843">
    <property type="term" value="F:rRNA binding"/>
    <property type="evidence" value="ECO:0007669"/>
    <property type="project" value="UniProtKB-UniRule"/>
</dbReference>
<dbReference type="GO" id="GO:0003735">
    <property type="term" value="F:structural constituent of ribosome"/>
    <property type="evidence" value="ECO:0007669"/>
    <property type="project" value="InterPro"/>
</dbReference>
<dbReference type="GO" id="GO:0006412">
    <property type="term" value="P:translation"/>
    <property type="evidence" value="ECO:0007669"/>
    <property type="project" value="UniProtKB-UniRule"/>
</dbReference>
<dbReference type="FunFam" id="3.90.930.12:FF:000001">
    <property type="entry name" value="50S ribosomal protein L6"/>
    <property type="match status" value="1"/>
</dbReference>
<dbReference type="FunFam" id="3.90.930.12:FF:000002">
    <property type="entry name" value="50S ribosomal protein L6"/>
    <property type="match status" value="1"/>
</dbReference>
<dbReference type="Gene3D" id="3.90.930.12">
    <property type="entry name" value="Ribosomal protein L6, alpha-beta domain"/>
    <property type="match status" value="2"/>
</dbReference>
<dbReference type="HAMAP" id="MF_01365_B">
    <property type="entry name" value="Ribosomal_uL6_B"/>
    <property type="match status" value="1"/>
</dbReference>
<dbReference type="InterPro" id="IPR000702">
    <property type="entry name" value="Ribosomal_uL6-like"/>
</dbReference>
<dbReference type="InterPro" id="IPR036789">
    <property type="entry name" value="Ribosomal_uL6-like_a/b-dom_sf"/>
</dbReference>
<dbReference type="InterPro" id="IPR020040">
    <property type="entry name" value="Ribosomal_uL6_a/b-dom"/>
</dbReference>
<dbReference type="InterPro" id="IPR019906">
    <property type="entry name" value="Ribosomal_uL6_bac-type"/>
</dbReference>
<dbReference type="InterPro" id="IPR002358">
    <property type="entry name" value="Ribosomal_uL6_CS"/>
</dbReference>
<dbReference type="NCBIfam" id="TIGR03654">
    <property type="entry name" value="L6_bact"/>
    <property type="match status" value="1"/>
</dbReference>
<dbReference type="PANTHER" id="PTHR11655">
    <property type="entry name" value="60S/50S RIBOSOMAL PROTEIN L6/L9"/>
    <property type="match status" value="1"/>
</dbReference>
<dbReference type="PANTHER" id="PTHR11655:SF14">
    <property type="entry name" value="LARGE RIBOSOMAL SUBUNIT PROTEIN UL6M"/>
    <property type="match status" value="1"/>
</dbReference>
<dbReference type="Pfam" id="PF00347">
    <property type="entry name" value="Ribosomal_L6"/>
    <property type="match status" value="2"/>
</dbReference>
<dbReference type="PIRSF" id="PIRSF002162">
    <property type="entry name" value="Ribosomal_L6"/>
    <property type="match status" value="1"/>
</dbReference>
<dbReference type="PRINTS" id="PR00059">
    <property type="entry name" value="RIBOSOMALL6"/>
</dbReference>
<dbReference type="SUPFAM" id="SSF56053">
    <property type="entry name" value="Ribosomal protein L6"/>
    <property type="match status" value="2"/>
</dbReference>
<dbReference type="PROSITE" id="PS00525">
    <property type="entry name" value="RIBOSOMAL_L6_1"/>
    <property type="match status" value="1"/>
</dbReference>
<name>RK6_PHATC</name>
<sequence length="178" mass="19786">MSRIGKLPITIPENVDINYNDSEITVKGKFGTLQTQIPTVIKITESDNILTVGLSEQTRSVRALHGLYRTLINNMVIGVSEQFEIILELKGVGYRAAVQNNEIILNLGYSHPVNIKIPNIISVEVVQNTTINLKSCDKELLGLFAANIRAWRQPEPYKGKGILYKGEQIIRKAGKSAK</sequence>
<feature type="chain" id="PRO_0000276580" description="Large ribosomal subunit protein uL6c">
    <location>
        <begin position="1"/>
        <end position="178"/>
    </location>
</feature>
<gene>
    <name type="primary">rpl6</name>
</gene>
<reference key="1">
    <citation type="journal article" date="2007" name="Mol. Genet. Genomics">
        <title>Chloroplast genomes of the diatoms Phaeodactylum tricornutum and Thalassiosira pseudonana: comparison with other plastid genomes of the red lineage.</title>
        <authorList>
            <person name="Oudot-Le Secq M.-P."/>
            <person name="Grimwood J."/>
            <person name="Shapiro H."/>
            <person name="Armbrust E.V."/>
            <person name="Bowler C."/>
            <person name="Green B.R."/>
        </authorList>
    </citation>
    <scope>NUCLEOTIDE SEQUENCE [LARGE SCALE GENOMIC DNA]</scope>
    <source>
        <strain>CCAP 1055/1</strain>
    </source>
</reference>
<accession>A0T0J3</accession>